<organism>
    <name type="scientific">Mantophasma kudubergense</name>
    <name type="common">Gladiator</name>
    <name type="synonym">Heel-walker</name>
    <dbReference type="NCBI Taxonomy" id="1037657"/>
    <lineage>
        <taxon>Eukaryota</taxon>
        <taxon>Metazoa</taxon>
        <taxon>Ecdysozoa</taxon>
        <taxon>Arthropoda</taxon>
        <taxon>Hexapoda</taxon>
        <taxon>Insecta</taxon>
        <taxon>Pterygota</taxon>
        <taxon>Neoptera</taxon>
        <taxon>Polyneoptera</taxon>
        <taxon>Mantophasmatodea</taxon>
        <taxon>Mantophasmatidae</taxon>
        <taxon>Mantophasma</taxon>
    </lineage>
</organism>
<evidence type="ECO:0000250" key="1">
    <source>
        <dbReference type="UniProtKB" id="P34405"/>
    </source>
</evidence>
<evidence type="ECO:0000255" key="2"/>
<evidence type="ECO:0000269" key="3">
    <source>
    </source>
</evidence>
<evidence type="ECO:0000303" key="4">
    <source>
    </source>
</evidence>
<evidence type="ECO:0000305" key="5"/>
<evidence type="ECO:0000305" key="6">
    <source>
    </source>
</evidence>
<keyword id="KW-0027">Amidation</keyword>
<keyword id="KW-0903">Direct protein sequencing</keyword>
<keyword id="KW-0527">Neuropeptide</keyword>
<keyword id="KW-0964">Secreted</keyword>
<sequence>ARSDNFVRL</sequence>
<name>FAR7_MANKU</name>
<protein>
    <recommendedName>
        <fullName evidence="4">Extended FMRFamide-7</fullName>
        <shortName evidence="4">FMRFa-7</shortName>
    </recommendedName>
</protein>
<reference evidence="5" key="1">
    <citation type="journal article" date="2012" name="Syst. Biol.">
        <title>Peptidomics-based phylogeny and biogeography of Mantophasmatodea (Hexapoda).</title>
        <authorList>
            <person name="Predel R."/>
            <person name="Neupert S."/>
            <person name="Huetteroth W."/>
            <person name="Kahnt J."/>
            <person name="Waidelich D."/>
            <person name="Roth S."/>
        </authorList>
    </citation>
    <scope>PROTEIN SEQUENCE</scope>
    <scope>AMIDATION AT LEU-9</scope>
    <source>
        <tissue evidence="3">Thoracic perisympathetic organs</tissue>
    </source>
</reference>
<proteinExistence type="evidence at protein level"/>
<dbReference type="GO" id="GO:0005576">
    <property type="term" value="C:extracellular region"/>
    <property type="evidence" value="ECO:0007669"/>
    <property type="project" value="UniProtKB-SubCell"/>
</dbReference>
<dbReference type="GO" id="GO:0007218">
    <property type="term" value="P:neuropeptide signaling pathway"/>
    <property type="evidence" value="ECO:0007669"/>
    <property type="project" value="UniProtKB-KW"/>
</dbReference>
<comment type="function">
    <text evidence="1">FMRFamides and FMRFamide-like peptides are neuropeptides.</text>
</comment>
<comment type="subcellular location">
    <subcellularLocation>
        <location evidence="6">Secreted</location>
    </subcellularLocation>
</comment>
<comment type="similarity">
    <text evidence="2">Belongs to the FARP (FMRF amide related peptide) family.</text>
</comment>
<accession>B0M3D1</accession>
<feature type="peptide" id="PRO_0000420777" description="Extended FMRFamide-7" evidence="3">
    <location>
        <begin position="1"/>
        <end position="9"/>
    </location>
</feature>
<feature type="modified residue" description="Leucine amide" evidence="3">
    <location>
        <position position="9"/>
    </location>
</feature>
<feature type="unsure residue" description="L or I" evidence="3">
    <location>
        <position position="9"/>
    </location>
</feature>